<organism>
    <name type="scientific">Listeria monocytogenes serotype 4b (strain F2365)</name>
    <dbReference type="NCBI Taxonomy" id="265669"/>
    <lineage>
        <taxon>Bacteria</taxon>
        <taxon>Bacillati</taxon>
        <taxon>Bacillota</taxon>
        <taxon>Bacilli</taxon>
        <taxon>Bacillales</taxon>
        <taxon>Listeriaceae</taxon>
        <taxon>Listeria</taxon>
    </lineage>
</organism>
<feature type="chain" id="PRO_0000170179" description="Large ribosomal subunit protein bL33A">
    <location>
        <begin position="1"/>
        <end position="49"/>
    </location>
</feature>
<keyword id="KW-0687">Ribonucleoprotein</keyword>
<keyword id="KW-0689">Ribosomal protein</keyword>
<dbReference type="EMBL" id="AE017262">
    <property type="protein sequence ID" value="AAT04127.1"/>
    <property type="status" value="ALT_INIT"/>
    <property type="molecule type" value="Genomic_DNA"/>
</dbReference>
<dbReference type="SMR" id="Q71ZY7"/>
<dbReference type="KEGG" id="lmf:LMOf2365_1352"/>
<dbReference type="HOGENOM" id="CLU_190949_0_2_9"/>
<dbReference type="GO" id="GO:0005737">
    <property type="term" value="C:cytoplasm"/>
    <property type="evidence" value="ECO:0007669"/>
    <property type="project" value="UniProtKB-ARBA"/>
</dbReference>
<dbReference type="GO" id="GO:1990904">
    <property type="term" value="C:ribonucleoprotein complex"/>
    <property type="evidence" value="ECO:0007669"/>
    <property type="project" value="UniProtKB-KW"/>
</dbReference>
<dbReference type="GO" id="GO:0005840">
    <property type="term" value="C:ribosome"/>
    <property type="evidence" value="ECO:0007669"/>
    <property type="project" value="UniProtKB-KW"/>
</dbReference>
<dbReference type="GO" id="GO:0003735">
    <property type="term" value="F:structural constituent of ribosome"/>
    <property type="evidence" value="ECO:0007669"/>
    <property type="project" value="InterPro"/>
</dbReference>
<dbReference type="GO" id="GO:0006412">
    <property type="term" value="P:translation"/>
    <property type="evidence" value="ECO:0007669"/>
    <property type="project" value="UniProtKB-UniRule"/>
</dbReference>
<dbReference type="Gene3D" id="2.20.28.120">
    <property type="entry name" value="Ribosomal protein L33"/>
    <property type="match status" value="1"/>
</dbReference>
<dbReference type="HAMAP" id="MF_00294">
    <property type="entry name" value="Ribosomal_bL33"/>
    <property type="match status" value="1"/>
</dbReference>
<dbReference type="InterPro" id="IPR001705">
    <property type="entry name" value="Ribosomal_bL33"/>
</dbReference>
<dbReference type="InterPro" id="IPR018264">
    <property type="entry name" value="Ribosomal_bL33_CS"/>
</dbReference>
<dbReference type="InterPro" id="IPR038584">
    <property type="entry name" value="Ribosomal_bL33_sf"/>
</dbReference>
<dbReference type="InterPro" id="IPR011332">
    <property type="entry name" value="Ribosomal_zn-bd"/>
</dbReference>
<dbReference type="NCBIfam" id="NF001764">
    <property type="entry name" value="PRK00504.1"/>
    <property type="match status" value="1"/>
</dbReference>
<dbReference type="NCBIfam" id="NF001860">
    <property type="entry name" value="PRK00595.1"/>
    <property type="match status" value="1"/>
</dbReference>
<dbReference type="NCBIfam" id="TIGR01023">
    <property type="entry name" value="rpmG_bact"/>
    <property type="match status" value="1"/>
</dbReference>
<dbReference type="PANTHER" id="PTHR43168">
    <property type="entry name" value="50S RIBOSOMAL PROTEIN L33, CHLOROPLASTIC"/>
    <property type="match status" value="1"/>
</dbReference>
<dbReference type="PANTHER" id="PTHR43168:SF2">
    <property type="entry name" value="LARGE RIBOSOMAL SUBUNIT PROTEIN BL33C"/>
    <property type="match status" value="1"/>
</dbReference>
<dbReference type="Pfam" id="PF00471">
    <property type="entry name" value="Ribosomal_L33"/>
    <property type="match status" value="1"/>
</dbReference>
<dbReference type="SUPFAM" id="SSF57829">
    <property type="entry name" value="Zn-binding ribosomal proteins"/>
    <property type="match status" value="1"/>
</dbReference>
<dbReference type="PROSITE" id="PS00582">
    <property type="entry name" value="RIBOSOMAL_L33"/>
    <property type="match status" value="1"/>
</dbReference>
<sequence>MRVNITLECTECGDRNYITTKNKRENPERIELKKYCPRLRRVTLHRETK</sequence>
<gene>
    <name evidence="1" type="primary">rpmG1</name>
    <name type="ordered locus">LMOf2365_1352</name>
</gene>
<evidence type="ECO:0000255" key="1">
    <source>
        <dbReference type="HAMAP-Rule" id="MF_00294"/>
    </source>
</evidence>
<evidence type="ECO:0000305" key="2"/>
<reference key="1">
    <citation type="journal article" date="2004" name="Nucleic Acids Res.">
        <title>Whole genome comparisons of serotype 4b and 1/2a strains of the food-borne pathogen Listeria monocytogenes reveal new insights into the core genome components of this species.</title>
        <authorList>
            <person name="Nelson K.E."/>
            <person name="Fouts D.E."/>
            <person name="Mongodin E.F."/>
            <person name="Ravel J."/>
            <person name="DeBoy R.T."/>
            <person name="Kolonay J.F."/>
            <person name="Rasko D.A."/>
            <person name="Angiuoli S.V."/>
            <person name="Gill S.R."/>
            <person name="Paulsen I.T."/>
            <person name="Peterson J.D."/>
            <person name="White O."/>
            <person name="Nelson W.C."/>
            <person name="Nierman W.C."/>
            <person name="Beanan M.J."/>
            <person name="Brinkac L.M."/>
            <person name="Daugherty S.C."/>
            <person name="Dodson R.J."/>
            <person name="Durkin A.S."/>
            <person name="Madupu R."/>
            <person name="Haft D.H."/>
            <person name="Selengut J."/>
            <person name="Van Aken S.E."/>
            <person name="Khouri H.M."/>
            <person name="Fedorova N."/>
            <person name="Forberger H.A."/>
            <person name="Tran B."/>
            <person name="Kathariou S."/>
            <person name="Wonderling L.D."/>
            <person name="Uhlich G.A."/>
            <person name="Bayles D.O."/>
            <person name="Luchansky J.B."/>
            <person name="Fraser C.M."/>
        </authorList>
    </citation>
    <scope>NUCLEOTIDE SEQUENCE [LARGE SCALE GENOMIC DNA]</scope>
    <source>
        <strain>F2365</strain>
    </source>
</reference>
<protein>
    <recommendedName>
        <fullName evidence="1">Large ribosomal subunit protein bL33A</fullName>
    </recommendedName>
    <alternativeName>
        <fullName evidence="1">50S ribosomal protein L33 1</fullName>
    </alternativeName>
</protein>
<name>RL331_LISMF</name>
<comment type="similarity">
    <text evidence="1">Belongs to the bacterial ribosomal protein bL33 family.</text>
</comment>
<comment type="sequence caution" evidence="2">
    <conflict type="erroneous initiation">
        <sequence resource="EMBL-CDS" id="AAT04127"/>
    </conflict>
    <text>Extended N-terminus.</text>
</comment>
<proteinExistence type="inferred from homology"/>
<accession>Q71ZY7</accession>